<reference key="1">
    <citation type="journal article" date="2001" name="Biosci. Biotechnol. Biochem.">
        <title>Cloning and analysis of valerophenone synthase gene expressed specifically in lupulin gland of hop (Humulus lupulus L.).</title>
        <authorList>
            <person name="Okada Y."/>
            <person name="Ito K."/>
        </authorList>
    </citation>
    <scope>NUCLEOTIDE SEQUENCE [GENOMIC DNA / MRNA]</scope>
    <scope>FUNCTION</scope>
    <scope>CATALYTIC ACTIVITY</scope>
    <scope>TISSUE SPECIFICITY</scope>
    <scope>PATHWAY</scope>
    <source>
        <strain>cv. 9418R</strain>
        <tissue>Lupulin gland</tissue>
    </source>
</reference>
<reference key="2">
    <citation type="submission" date="2000-08" db="EMBL/GenBank/DDBJ databases">
        <title>gDNA of valerophenone synthase of Humulus lupulus.</title>
        <authorList>
            <person name="Yukio O."/>
            <person name="Kazutoshi I."/>
        </authorList>
    </citation>
    <scope>NUCLEOTIDE SEQUENCE [GENOMIC DNA]</scope>
    <source>
        <strain>cv. 9418R</strain>
    </source>
</reference>
<reference key="3">
    <citation type="submission" date="2008-12" db="EMBL/GenBank/DDBJ databases">
        <title>In vitro utilization of malonyl-3'-dephospho-CoA as an extender substrate by plant type III polyketide synthases.</title>
        <authorList>
            <person name="Skopek J."/>
            <person name="Matousek J."/>
        </authorList>
    </citation>
    <scope>NUCLEOTIDE SEQUENCE [MRNA]</scope>
    <scope>VARIANTS GLU-232 AND LEU-385</scope>
    <source>
        <strain>cv. Osvals's 72</strain>
        <tissue>Lupulin gland</tissue>
    </source>
</reference>
<reference key="4">
    <citation type="journal article" date="2008" name="Ann. Bot.">
        <title>DNA sequence and expression variation of hop (Humulus lupulus) valerophenone synthase (VPS), a key gene in bitter acid biosynthesis.</title>
        <authorList>
            <person name="Castro C.B."/>
            <person name="Whittock L.D."/>
            <person name="Whittock S.P."/>
            <person name="Leggett G."/>
            <person name="Koutoulis A."/>
        </authorList>
    </citation>
    <scope>NUCLEOTIDE SEQUENCE [GENOMIC DNA] OF 10-394</scope>
    <scope>VARIANT GLU-232</scope>
    <scope>TISSUE SPECIFICITY</scope>
    <scope>DEVELOPMENTAL STAGE</scope>
    <source>
        <strain>cv. Cascade</strain>
        <strain>cv. Cluster</strain>
        <strain>cv. Eastern Gold</strain>
        <strain>cv. Ember</strain>
        <strain>cv. Golding</strain>
        <strain>cv. Hallertau</strain>
        <strain>cv. J78</strain>
        <strain>cv. Nugget</strain>
        <strain>cv. Opal</strain>
        <strain>cv. Saaz X</strain>
        <strain>cv. Symphony</strain>
        <strain>cv. Victoria</strain>
    </source>
</reference>
<reference key="5">
    <citation type="journal article" date="1999" name="Eur. J. Biochem.">
        <title>Phlorisovalerophenone synthase, a novel polyketide synthase from hop (Humulus lupulus L.) cones.</title>
        <authorList>
            <person name="Paniego N.B."/>
            <person name="Zuurbier K.W.M."/>
            <person name="Fung S.-Y."/>
            <person name="van der Heijden R."/>
            <person name="Scheffer J.J.C."/>
            <person name="Verpoorte R."/>
        </authorList>
    </citation>
    <scope>PROTEIN SEQUENCE OF 285-319 AND 362-391</scope>
    <scope>FUNCTION</scope>
    <scope>CATALYTIC ACTIVITY</scope>
    <scope>TISSUE SPECIFICITY</scope>
    <scope>SUBUNIT</scope>
    <scope>BIOPHYSICOCHEMICAL PROPERTIES</scope>
    <source>
        <tissue>Cone</tissue>
        <tissue>Lupulin gland</tissue>
    </source>
</reference>
<reference key="6">
    <citation type="journal article" date="2004" name="Biosci. Biotechnol. Biochem.">
        <title>Enzymatic reactions by five chalcone synthase homologs from hop (Humulus lupulus L.).</title>
        <authorList>
            <person name="Okada Y."/>
            <person name="Sano Y."/>
            <person name="Kaneko T."/>
            <person name="Abe I."/>
            <person name="Noguchi H."/>
            <person name="Ito K."/>
        </authorList>
    </citation>
    <scope>FUNCTION</scope>
    <scope>CATALYTIC ACTIVITY</scope>
</reference>
<reference key="7">
    <citation type="journal article" date="2019" name="Nat. Prod. Rep.">
        <title>Non-volatile natural products in plant glandular trichomes: chemistry, biological activities and biosynthesis.</title>
        <authorList>
            <person name="Liu Y."/>
            <person name="Jing S.-X."/>
            <person name="Luo S.-H."/>
            <person name="Li S.-H."/>
        </authorList>
    </citation>
    <scope>PATHWAY</scope>
    <scope>REVIEW</scope>
</reference>
<organism>
    <name type="scientific">Humulus lupulus</name>
    <name type="common">European hop</name>
    <dbReference type="NCBI Taxonomy" id="3486"/>
    <lineage>
        <taxon>Eukaryota</taxon>
        <taxon>Viridiplantae</taxon>
        <taxon>Streptophyta</taxon>
        <taxon>Embryophyta</taxon>
        <taxon>Tracheophyta</taxon>
        <taxon>Spermatophyta</taxon>
        <taxon>Magnoliopsida</taxon>
        <taxon>eudicotyledons</taxon>
        <taxon>Gunneridae</taxon>
        <taxon>Pentapetalae</taxon>
        <taxon>rosids</taxon>
        <taxon>fabids</taxon>
        <taxon>Rosales</taxon>
        <taxon>Cannabaceae</taxon>
        <taxon>Humulus</taxon>
    </lineage>
</organism>
<keyword id="KW-0012">Acyltransferase</keyword>
<keyword id="KW-0903">Direct protein sequencing</keyword>
<keyword id="KW-0808">Transferase</keyword>
<comment type="function">
    <text evidence="2 3 4 12">Involved in the biosynthesis of prenylated phenolics natural products which contribute to the bitter taste of beer and display broad biological activities (Probable). Polyketide synthase that can use 3-methylbutanoyl-CoA (isovaleryl-CoA) and 2-methylpropanoyl-CoA (isobutyryl-CoA) as substrates to produce phlorisovalerophenone (PIVP) and phlorisobutyrophenone (2-methyl-1-(2,4,6-trihydroxyphenyl)propan-1-one), respectively, intermediates in the biosynthesis of the bitter acids (alpha and beta) acids (PubMed:10336650, PubMed:11272819, PubMed:15170123). Can also produce naringenin-chalcone (2',4,4',6'-tetrahydroxychalcone) from 4-coumaroyl-CoA with a lower efficiency (PubMed:15170123).</text>
</comment>
<comment type="catalytic activity">
    <reaction evidence="2 3 4">
        <text>3-methylbutanoyl-CoA + 3 malonyl-CoA + 3 H(+) = phlorisovalerophenone + 3 CO2 + 4 CoA</text>
        <dbReference type="Rhea" id="RHEA:23572"/>
        <dbReference type="ChEBI" id="CHEBI:15378"/>
        <dbReference type="ChEBI" id="CHEBI:15951"/>
        <dbReference type="ChEBI" id="CHEBI:16526"/>
        <dbReference type="ChEBI" id="CHEBI:57287"/>
        <dbReference type="ChEBI" id="CHEBI:57345"/>
        <dbReference type="ChEBI" id="CHEBI:57384"/>
        <dbReference type="EC" id="2.3.1.156"/>
    </reaction>
    <physiologicalReaction direction="left-to-right" evidence="2 3 4">
        <dbReference type="Rhea" id="RHEA:23573"/>
    </physiologicalReaction>
</comment>
<comment type="catalytic activity">
    <reaction evidence="4">
        <text>(E)-4-coumaroyl-CoA + 3 malonyl-CoA + 3 H(+) = 2',4,4',6'-tetrahydroxychalcone + 3 CO2 + 4 CoA</text>
        <dbReference type="Rhea" id="RHEA:11128"/>
        <dbReference type="ChEBI" id="CHEBI:15378"/>
        <dbReference type="ChEBI" id="CHEBI:15413"/>
        <dbReference type="ChEBI" id="CHEBI:16526"/>
        <dbReference type="ChEBI" id="CHEBI:57287"/>
        <dbReference type="ChEBI" id="CHEBI:57384"/>
        <dbReference type="ChEBI" id="CHEBI:85008"/>
        <dbReference type="EC" id="2.3.1.74"/>
    </reaction>
    <physiologicalReaction direction="left-to-right" evidence="4">
        <dbReference type="Rhea" id="RHEA:11129"/>
    </physiologicalReaction>
</comment>
<comment type="catalytic activity">
    <molecule>Phloroisovalerophenone synthase</molecule>
    <reaction evidence="4">
        <text>2-methylpropanoyl-CoA + 3 malonyl-CoA + 3 H(+) = phlorisobutanophenone + 3 CO2 + 4 CoA</text>
        <dbReference type="Rhea" id="RHEA:67000"/>
        <dbReference type="ChEBI" id="CHEBI:15378"/>
        <dbReference type="ChEBI" id="CHEBI:16526"/>
        <dbReference type="ChEBI" id="CHEBI:57287"/>
        <dbReference type="ChEBI" id="CHEBI:57338"/>
        <dbReference type="ChEBI" id="CHEBI:57384"/>
        <dbReference type="ChEBI" id="CHEBI:133419"/>
        <dbReference type="EC" id="2.3.1.156"/>
    </reaction>
    <physiologicalReaction direction="left-to-right" evidence="4">
        <dbReference type="Rhea" id="RHEA:67001"/>
    </physiologicalReaction>
</comment>
<comment type="biophysicochemical properties">
    <kinetics>
        <KM evidence="2">4 uM for 3-methylbutanoyl-CoA</KM>
        <KM evidence="2">10 uM for 2-methylpropanoyl-CoA</KM>
        <KM evidence="2">33 uM for malonyl-CoA</KM>
    </kinetics>
    <phDependence>
        <text evidence="2">Optimum pH is 7.</text>
    </phDependence>
</comment>
<comment type="pathway">
    <text evidence="12">Secondary metabolite biosynthesis.</text>
</comment>
<comment type="subunit">
    <text evidence="2">Homodimer.</text>
</comment>
<comment type="tissue specificity">
    <text evidence="2 3 5">Expressed in lupulin gland (PubMed:10336650, PubMed:11272819). Present at low levels in leaves but accumulates in cones (PubMed:18519445).</text>
</comment>
<comment type="developmental stage">
    <text evidence="5">Accumulates early in cone development and stays at high levels throughout cone formation.</text>
</comment>
<comment type="miscellaneous">
    <text evidence="5">Expression level is directly related with bitter (alpha) acids content, thus influencing the bitter taste of beer, cv. Symphony and cv. Ember having highest levels.</text>
</comment>
<comment type="similarity">
    <text evidence="9">Belongs to the thiolase-like superfamily. Chalcone/stilbene synthases family.</text>
</comment>
<evidence type="ECO:0000255" key="1">
    <source>
        <dbReference type="PROSITE-ProRule" id="PRU10023"/>
    </source>
</evidence>
<evidence type="ECO:0000269" key="2">
    <source>
    </source>
</evidence>
<evidence type="ECO:0000269" key="3">
    <source>
    </source>
</evidence>
<evidence type="ECO:0000269" key="4">
    <source>
    </source>
</evidence>
<evidence type="ECO:0000269" key="5">
    <source>
    </source>
</evidence>
<evidence type="ECO:0000269" key="6">
    <source ref="3"/>
</evidence>
<evidence type="ECO:0000303" key="7">
    <source>
    </source>
</evidence>
<evidence type="ECO:0000303" key="8">
    <source>
    </source>
</evidence>
<evidence type="ECO:0000305" key="9"/>
<evidence type="ECO:0000305" key="10">
    <source>
    </source>
</evidence>
<evidence type="ECO:0000305" key="11">
    <source>
    </source>
</evidence>
<evidence type="ECO:0000305" key="12">
    <source>
    </source>
</evidence>
<feature type="chain" id="PRO_0000216085" description="Phloroisovalerophenone synthase">
    <location>
        <begin position="1"/>
        <end position="394"/>
    </location>
</feature>
<feature type="active site" evidence="1">
    <location>
        <position position="166"/>
    </location>
</feature>
<feature type="sequence variant" description="In strain: cv. Osvals's 72, cv. Cluster and cv. Nugget." evidence="5 6">
    <original>A</original>
    <variation>E</variation>
    <location>
        <position position="232"/>
    </location>
</feature>
<feature type="sequence variant" description="In strain: cv. Osvals's 72." evidence="6">
    <original>V</original>
    <variation>L</variation>
    <location>
        <position position="385"/>
    </location>
</feature>
<proteinExistence type="evidence at protein level"/>
<accession>O80400</accession>
<accession>B3GEA6</accession>
<accession>B3GEA7</accession>
<accession>B3GEA8</accession>
<accession>B3GEA9</accession>
<accession>B3GEB0</accession>
<accession>B3GEB1</accession>
<accession>B3GEB2</accession>
<accession>B3GEB3</accession>
<accession>B3GEB4</accession>
<accession>B3GEB5</accession>
<accession>B3GEB6</accession>
<accession>B9VI88</accession>
<gene>
    <name evidence="7" type="primary">VPS</name>
</gene>
<name>VPS_HUMLU</name>
<dbReference type="EC" id="2.3.1.156" evidence="2 3 4"/>
<dbReference type="EC" id="2.3.1.74" evidence="4"/>
<dbReference type="EMBL" id="AB015430">
    <property type="protein sequence ID" value="BAA29039.1"/>
    <property type="molecule type" value="mRNA"/>
</dbReference>
<dbReference type="EMBL" id="AB047593">
    <property type="protein sequence ID" value="BAB12102.1"/>
    <property type="molecule type" value="Genomic_DNA"/>
</dbReference>
<dbReference type="EMBL" id="FJ554588">
    <property type="protein sequence ID" value="ACM17227.1"/>
    <property type="molecule type" value="mRNA"/>
</dbReference>
<dbReference type="EMBL" id="EU685789">
    <property type="protein sequence ID" value="ACD69648.1"/>
    <property type="molecule type" value="Genomic_DNA"/>
</dbReference>
<dbReference type="EMBL" id="EU685790">
    <property type="protein sequence ID" value="ACD69649.1"/>
    <property type="molecule type" value="Genomic_DNA"/>
</dbReference>
<dbReference type="EMBL" id="EU685791">
    <property type="protein sequence ID" value="ACD69650.1"/>
    <property type="molecule type" value="Genomic_DNA"/>
</dbReference>
<dbReference type="EMBL" id="EU685792">
    <property type="protein sequence ID" value="ACD69651.1"/>
    <property type="molecule type" value="Genomic_DNA"/>
</dbReference>
<dbReference type="EMBL" id="EU685793">
    <property type="protein sequence ID" value="ACD69652.1"/>
    <property type="molecule type" value="Genomic_DNA"/>
</dbReference>
<dbReference type="EMBL" id="EU685794">
    <property type="protein sequence ID" value="ACD69653.1"/>
    <property type="molecule type" value="Genomic_DNA"/>
</dbReference>
<dbReference type="EMBL" id="EU685795">
    <property type="protein sequence ID" value="ACD69654.1"/>
    <property type="molecule type" value="Genomic_DNA"/>
</dbReference>
<dbReference type="EMBL" id="EU685796">
    <property type="protein sequence ID" value="ACD69655.1"/>
    <property type="molecule type" value="Genomic_DNA"/>
</dbReference>
<dbReference type="EMBL" id="EU685797">
    <property type="protein sequence ID" value="ACD69656.1"/>
    <property type="molecule type" value="Genomic_DNA"/>
</dbReference>
<dbReference type="EMBL" id="EU685798">
    <property type="protein sequence ID" value="ACD69657.1"/>
    <property type="molecule type" value="Genomic_DNA"/>
</dbReference>
<dbReference type="EMBL" id="EU685799">
    <property type="protein sequence ID" value="ACD69658.1"/>
    <property type="molecule type" value="Genomic_DNA"/>
</dbReference>
<dbReference type="EMBL" id="EU685800">
    <property type="protein sequence ID" value="ACD69659.1"/>
    <property type="molecule type" value="Genomic_DNA"/>
</dbReference>
<dbReference type="PIR" id="JC7639">
    <property type="entry name" value="JC7639"/>
</dbReference>
<dbReference type="SMR" id="O80400"/>
<dbReference type="BioCyc" id="MetaCyc:MONOMER-11999"/>
<dbReference type="BRENDA" id="2.3.1.156">
    <property type="organism ID" value="2716"/>
</dbReference>
<dbReference type="GO" id="GO:0016210">
    <property type="term" value="F:naringenin-chalcone synthase activity"/>
    <property type="evidence" value="ECO:0007669"/>
    <property type="project" value="UniProtKB-EC"/>
</dbReference>
<dbReference type="GO" id="GO:0050634">
    <property type="term" value="F:phloroisovalerophenone synthase activity"/>
    <property type="evidence" value="ECO:0007669"/>
    <property type="project" value="UniProtKB-EC"/>
</dbReference>
<dbReference type="GO" id="GO:0030639">
    <property type="term" value="P:polyketide biosynthetic process"/>
    <property type="evidence" value="ECO:0007669"/>
    <property type="project" value="TreeGrafter"/>
</dbReference>
<dbReference type="CDD" id="cd00831">
    <property type="entry name" value="CHS_like"/>
    <property type="match status" value="1"/>
</dbReference>
<dbReference type="FunFam" id="3.40.47.10:FF:000014">
    <property type="entry name" value="Chalcone synthase 1"/>
    <property type="match status" value="1"/>
</dbReference>
<dbReference type="FunFam" id="3.40.47.10:FF:000025">
    <property type="entry name" value="Chalcone synthase 2"/>
    <property type="match status" value="1"/>
</dbReference>
<dbReference type="Gene3D" id="3.40.47.10">
    <property type="match status" value="2"/>
</dbReference>
<dbReference type="InterPro" id="IPR012328">
    <property type="entry name" value="Chalcone/stilbene_synt_C"/>
</dbReference>
<dbReference type="InterPro" id="IPR001099">
    <property type="entry name" value="Chalcone/stilbene_synt_N"/>
</dbReference>
<dbReference type="InterPro" id="IPR018088">
    <property type="entry name" value="Chalcone/stilbene_synthase_AS"/>
</dbReference>
<dbReference type="InterPro" id="IPR011141">
    <property type="entry name" value="Polyketide_synthase_type-III"/>
</dbReference>
<dbReference type="InterPro" id="IPR016039">
    <property type="entry name" value="Thiolase-like"/>
</dbReference>
<dbReference type="PANTHER" id="PTHR11877:SF14">
    <property type="entry name" value="CHALCONE SYNTHASE"/>
    <property type="match status" value="1"/>
</dbReference>
<dbReference type="PANTHER" id="PTHR11877">
    <property type="entry name" value="HYDROXYMETHYLGLUTARYL-COA SYNTHASE"/>
    <property type="match status" value="1"/>
</dbReference>
<dbReference type="Pfam" id="PF02797">
    <property type="entry name" value="Chal_sti_synt_C"/>
    <property type="match status" value="1"/>
</dbReference>
<dbReference type="Pfam" id="PF00195">
    <property type="entry name" value="Chal_sti_synt_N"/>
    <property type="match status" value="1"/>
</dbReference>
<dbReference type="PIRSF" id="PIRSF000451">
    <property type="entry name" value="PKS_III"/>
    <property type="match status" value="1"/>
</dbReference>
<dbReference type="SUPFAM" id="SSF53901">
    <property type="entry name" value="Thiolase-like"/>
    <property type="match status" value="2"/>
</dbReference>
<dbReference type="PROSITE" id="PS00441">
    <property type="entry name" value="CHALCONE_SYNTH"/>
    <property type="match status" value="1"/>
</dbReference>
<sequence>MASVTVEQIRKAQRAEGPATILAIGTAVPANCFNQADFPDYYFRVTKSEHMTDLKKKFQRMCEKSTIKKRYLHLTEEHLKQNPHLCEYNAPSLNTRQDMLVVEVPKLGKEAAINAIKEWGQPKSKITHLIFCTGSSIDMPGADYQCAKLLGLRPSVKRVMLYQLGCYAGGKVLRIAKDIAENNKGARVLIVCSEITACIFRGPSEKHLDCLVGQSLFGDGASSVIVGADPDASVGERPIFELVSAAQTILPNSDGAIAGHVTEAGLTFHLLRDVPGLISQNIEKSLIEAFTPIGINDWNNIFWIAHPGGPAILDEIEAKLELKKEKMKASREMLSEYGNMSCASVFFIVDEMRKQSSKEGKSTTGDGLEWGALFGFGPGLTVETVVLHSVPTNV</sequence>
<protein>
    <recommendedName>
        <fullName evidence="10">Phloroisovalerophenone synthase</fullName>
        <shortName evidence="10">3-methyl-1-(trihydroxyphenyl)butan-1-one synthase</shortName>
        <shortName evidence="7">Valerophenone synthase</shortName>
        <ecNumber evidence="2 3 4">2.3.1.156</ecNumber>
    </recommendedName>
    <alternativeName>
        <fullName evidence="8">Naringenin-chalcone synthase</fullName>
        <shortName evidence="11">2',4,4',6'-tetrahydroxychalcone synthase</shortName>
        <ecNumber evidence="4">2.3.1.74</ecNumber>
    </alternativeName>
    <alternativeName>
        <fullName evidence="10">Phlorisobutyrophenone synthase</fullName>
        <shortName evidence="10">2-methyl-1-(2,4,6-trihydroxyphenyl)propan-1-one synthase</shortName>
        <ecNumber evidence="2">2.3.1.156</ecNumber>
    </alternativeName>
</protein>